<reference key="1">
    <citation type="journal article" date="2001" name="Science">
        <title>Comparative genomics of Listeria species.</title>
        <authorList>
            <person name="Glaser P."/>
            <person name="Frangeul L."/>
            <person name="Buchrieser C."/>
            <person name="Rusniok C."/>
            <person name="Amend A."/>
            <person name="Baquero F."/>
            <person name="Berche P."/>
            <person name="Bloecker H."/>
            <person name="Brandt P."/>
            <person name="Chakraborty T."/>
            <person name="Charbit A."/>
            <person name="Chetouani F."/>
            <person name="Couve E."/>
            <person name="de Daruvar A."/>
            <person name="Dehoux P."/>
            <person name="Domann E."/>
            <person name="Dominguez-Bernal G."/>
            <person name="Duchaud E."/>
            <person name="Durant L."/>
            <person name="Dussurget O."/>
            <person name="Entian K.-D."/>
            <person name="Fsihi H."/>
            <person name="Garcia-del Portillo F."/>
            <person name="Garrido P."/>
            <person name="Gautier L."/>
            <person name="Goebel W."/>
            <person name="Gomez-Lopez N."/>
            <person name="Hain T."/>
            <person name="Hauf J."/>
            <person name="Jackson D."/>
            <person name="Jones L.-M."/>
            <person name="Kaerst U."/>
            <person name="Kreft J."/>
            <person name="Kuhn M."/>
            <person name="Kunst F."/>
            <person name="Kurapkat G."/>
            <person name="Madueno E."/>
            <person name="Maitournam A."/>
            <person name="Mata Vicente J."/>
            <person name="Ng E."/>
            <person name="Nedjari H."/>
            <person name="Nordsiek G."/>
            <person name="Novella S."/>
            <person name="de Pablos B."/>
            <person name="Perez-Diaz J.-C."/>
            <person name="Purcell R."/>
            <person name="Remmel B."/>
            <person name="Rose M."/>
            <person name="Schlueter T."/>
            <person name="Simoes N."/>
            <person name="Tierrez A."/>
            <person name="Vazquez-Boland J.-A."/>
            <person name="Voss H."/>
            <person name="Wehland J."/>
            <person name="Cossart P."/>
        </authorList>
    </citation>
    <scope>NUCLEOTIDE SEQUENCE [LARGE SCALE GENOMIC DNA]</scope>
    <source>
        <strain>ATCC BAA-680 / CLIP 11262</strain>
    </source>
</reference>
<proteinExistence type="inferred from homology"/>
<protein>
    <recommendedName>
        <fullName evidence="1">Orotate phosphoribosyltransferase</fullName>
        <shortName evidence="1">OPRT</shortName>
        <shortName evidence="1">OPRTase</shortName>
        <ecNumber evidence="1">2.4.2.10</ecNumber>
    </recommendedName>
</protein>
<keyword id="KW-0328">Glycosyltransferase</keyword>
<keyword id="KW-0460">Magnesium</keyword>
<keyword id="KW-0665">Pyrimidine biosynthesis</keyword>
<keyword id="KW-0808">Transferase</keyword>
<evidence type="ECO:0000255" key="1">
    <source>
        <dbReference type="HAMAP-Rule" id="MF_01208"/>
    </source>
</evidence>
<name>PYRE_LISIN</name>
<dbReference type="EC" id="2.4.2.10" evidence="1"/>
<dbReference type="EMBL" id="AL596170">
    <property type="protein sequence ID" value="CAC97175.1"/>
    <property type="molecule type" value="Genomic_DNA"/>
</dbReference>
<dbReference type="PIR" id="AG1675">
    <property type="entry name" value="AG1675"/>
</dbReference>
<dbReference type="RefSeq" id="WP_003762954.1">
    <property type="nucleotide sequence ID" value="NC_003212.1"/>
</dbReference>
<dbReference type="SMR" id="Q92AH7"/>
<dbReference type="STRING" id="272626.gene:17566303"/>
<dbReference type="KEGG" id="lin:pyrE"/>
<dbReference type="eggNOG" id="COG0461">
    <property type="taxonomic scope" value="Bacteria"/>
</dbReference>
<dbReference type="HOGENOM" id="CLU_074878_1_1_9"/>
<dbReference type="OrthoDB" id="9802134at2"/>
<dbReference type="UniPathway" id="UPA00070">
    <property type="reaction ID" value="UER00119"/>
</dbReference>
<dbReference type="Proteomes" id="UP000002513">
    <property type="component" value="Chromosome"/>
</dbReference>
<dbReference type="GO" id="GO:0000287">
    <property type="term" value="F:magnesium ion binding"/>
    <property type="evidence" value="ECO:0007669"/>
    <property type="project" value="UniProtKB-UniRule"/>
</dbReference>
<dbReference type="GO" id="GO:0004588">
    <property type="term" value="F:orotate phosphoribosyltransferase activity"/>
    <property type="evidence" value="ECO:0007669"/>
    <property type="project" value="UniProtKB-UniRule"/>
</dbReference>
<dbReference type="GO" id="GO:0044205">
    <property type="term" value="P:'de novo' UMP biosynthetic process"/>
    <property type="evidence" value="ECO:0007669"/>
    <property type="project" value="UniProtKB-UniRule"/>
</dbReference>
<dbReference type="GO" id="GO:0019856">
    <property type="term" value="P:pyrimidine nucleobase biosynthetic process"/>
    <property type="evidence" value="ECO:0007669"/>
    <property type="project" value="TreeGrafter"/>
</dbReference>
<dbReference type="CDD" id="cd06223">
    <property type="entry name" value="PRTases_typeI"/>
    <property type="match status" value="1"/>
</dbReference>
<dbReference type="Gene3D" id="3.40.50.2020">
    <property type="match status" value="1"/>
</dbReference>
<dbReference type="HAMAP" id="MF_01208">
    <property type="entry name" value="PyrE"/>
    <property type="match status" value="1"/>
</dbReference>
<dbReference type="InterPro" id="IPR023031">
    <property type="entry name" value="OPRT"/>
</dbReference>
<dbReference type="InterPro" id="IPR004467">
    <property type="entry name" value="Or_phspho_trans_dom"/>
</dbReference>
<dbReference type="InterPro" id="IPR000836">
    <property type="entry name" value="PRibTrfase_dom"/>
</dbReference>
<dbReference type="InterPro" id="IPR029057">
    <property type="entry name" value="PRTase-like"/>
</dbReference>
<dbReference type="NCBIfam" id="TIGR00336">
    <property type="entry name" value="pyrE"/>
    <property type="match status" value="1"/>
</dbReference>
<dbReference type="PANTHER" id="PTHR19278">
    <property type="entry name" value="OROTATE PHOSPHORIBOSYLTRANSFERASE"/>
    <property type="match status" value="1"/>
</dbReference>
<dbReference type="PANTHER" id="PTHR19278:SF9">
    <property type="entry name" value="URIDINE 5'-MONOPHOSPHATE SYNTHASE"/>
    <property type="match status" value="1"/>
</dbReference>
<dbReference type="Pfam" id="PF00156">
    <property type="entry name" value="Pribosyltran"/>
    <property type="match status" value="1"/>
</dbReference>
<dbReference type="SUPFAM" id="SSF53271">
    <property type="entry name" value="PRTase-like"/>
    <property type="match status" value="1"/>
</dbReference>
<dbReference type="PROSITE" id="PS00103">
    <property type="entry name" value="PUR_PYR_PR_TRANSFER"/>
    <property type="match status" value="1"/>
</dbReference>
<comment type="function">
    <text evidence="1">Catalyzes the transfer of a ribosyl phosphate group from 5-phosphoribose 1-diphosphate to orotate, leading to the formation of orotidine monophosphate (OMP).</text>
</comment>
<comment type="catalytic activity">
    <reaction evidence="1">
        <text>orotidine 5'-phosphate + diphosphate = orotate + 5-phospho-alpha-D-ribose 1-diphosphate</text>
        <dbReference type="Rhea" id="RHEA:10380"/>
        <dbReference type="ChEBI" id="CHEBI:30839"/>
        <dbReference type="ChEBI" id="CHEBI:33019"/>
        <dbReference type="ChEBI" id="CHEBI:57538"/>
        <dbReference type="ChEBI" id="CHEBI:58017"/>
        <dbReference type="EC" id="2.4.2.10"/>
    </reaction>
</comment>
<comment type="cofactor">
    <cofactor evidence="1">
        <name>Mg(2+)</name>
        <dbReference type="ChEBI" id="CHEBI:18420"/>
    </cofactor>
</comment>
<comment type="pathway">
    <text evidence="1">Pyrimidine metabolism; UMP biosynthesis via de novo pathway; UMP from orotate: step 1/2.</text>
</comment>
<comment type="subunit">
    <text evidence="1">Homodimer.</text>
</comment>
<comment type="similarity">
    <text evidence="1">Belongs to the purine/pyrimidine phosphoribosyltransferase family. PyrE subfamily.</text>
</comment>
<accession>Q92AH7</accession>
<feature type="chain" id="PRO_0000110706" description="Orotate phosphoribosyltransferase">
    <location>
        <begin position="1"/>
        <end position="209"/>
    </location>
</feature>
<feature type="binding site" evidence="1">
    <location>
        <position position="96"/>
    </location>
    <ligand>
        <name>5-phospho-alpha-D-ribose 1-diphosphate</name>
        <dbReference type="ChEBI" id="CHEBI:58017"/>
        <note>ligand shared between dimeric partners</note>
    </ligand>
</feature>
<feature type="binding site" evidence="1">
    <location>
        <position position="100"/>
    </location>
    <ligand>
        <name>5-phospho-alpha-D-ribose 1-diphosphate</name>
        <dbReference type="ChEBI" id="CHEBI:58017"/>
        <note>ligand shared between dimeric partners</note>
    </ligand>
</feature>
<feature type="binding site" evidence="1">
    <location>
        <position position="102"/>
    </location>
    <ligand>
        <name>5-phospho-alpha-D-ribose 1-diphosphate</name>
        <dbReference type="ChEBI" id="CHEBI:58017"/>
        <note>ligand shared between dimeric partners</note>
    </ligand>
</feature>
<feature type="binding site" description="in other chain" evidence="1">
    <location>
        <begin position="122"/>
        <end position="130"/>
    </location>
    <ligand>
        <name>5-phospho-alpha-D-ribose 1-diphosphate</name>
        <dbReference type="ChEBI" id="CHEBI:58017"/>
        <note>ligand shared between dimeric partners</note>
    </ligand>
</feature>
<feature type="binding site" evidence="1">
    <location>
        <position position="126"/>
    </location>
    <ligand>
        <name>orotate</name>
        <dbReference type="ChEBI" id="CHEBI:30839"/>
    </ligand>
</feature>
<gene>
    <name evidence="1" type="primary">pyrE</name>
    <name type="ordered locus">lin1945</name>
</gene>
<sequence length="209" mass="22919">MSIEKQVAEQLLEIKAVFLKPNEPFTWASGIKSPIYCDNRLTLGFPKVRQFIAKSLAEKIKENFGEVDVVAGTATAGIPHAAWVSDLLDLPMVYVRSKAKEHGKGNQIEGPLTKGQKVVVIEDLISTGGSSLKAVEALEEAGAEVLGIAAIFTYGLDKGKKLLEESNTKLVTLTNYDELIEVALNKNYVTTEDMATLKEWKKNPEVWGK</sequence>
<organism>
    <name type="scientific">Listeria innocua serovar 6a (strain ATCC BAA-680 / CLIP 11262)</name>
    <dbReference type="NCBI Taxonomy" id="272626"/>
    <lineage>
        <taxon>Bacteria</taxon>
        <taxon>Bacillati</taxon>
        <taxon>Bacillota</taxon>
        <taxon>Bacilli</taxon>
        <taxon>Bacillales</taxon>
        <taxon>Listeriaceae</taxon>
        <taxon>Listeria</taxon>
    </lineage>
</organism>